<keyword id="KW-0002">3D-structure</keyword>
<keyword id="KW-0024">Alternative initiation</keyword>
<keyword id="KW-0903">Direct protein sequencing</keyword>
<keyword id="KW-0256">Endoplasmic reticulum</keyword>
<keyword id="KW-0325">Glycoprotein</keyword>
<keyword id="KW-0414">Isoprene biosynthesis</keyword>
<keyword id="KW-0472">Membrane</keyword>
<keyword id="KW-0521">NADP</keyword>
<keyword id="KW-0560">Oxidoreductase</keyword>
<keyword id="KW-0597">Phosphoprotein</keyword>
<keyword id="KW-1185">Reference proteome</keyword>
<keyword id="KW-0812">Transmembrane</keyword>
<keyword id="KW-1133">Transmembrane helix</keyword>
<sequence length="592" mass="63598">MDLRRRPPKPPVTNNNNSNGSFRSYQPRTSDDDHRRRATTIAPPPKASDALPLPLYLTNAVFFTLFFSVAYYLLHRWRDKIRYNTPLHVVTITELGAIIALIASFIYLLGFFGIDFVQSFISRASGDAWDLADTIDDDDHRLVTCSPPTPIVSVAKLPNPEPIVTESLPEEDEEIVKSVIDGVIPSYSLESRLGDCKRAASIRREALQRVTGRSIEGLPLDGFDYESILGQCCEMPVGYIQIPVGIAGPLLLDGYEYSVPMATTEGCLVASTNRGCKAMFISGGATSTVLKDGMTRAPVVRFASARRASELKFFLENPENFDTLAVVFNRSSRFARLQSVKCTIAGKNAYVRFCCSTGDAMGMNMVSKGVQNVLEYLTDDFPDMDVIGISGNFCSDKKPAAVNWIEGRGKSVVCEAVIRGEIVNKVLKTSVAALVELNMLKNLAGSAVAGSLGGFNAHASNIVSAVFIATGQDPAQNVESSQCITMMEAINDGKDIHISVTMPSIEVGTVGGGTQLASQSACLNLLGVKGASTESPGMNARRLATIVAGAVLAGELSLMSAIAAGQLVRSHMKYNRSSRDISGATTTTTTTT</sequence>
<name>HMDH1_ARATH</name>
<proteinExistence type="evidence at protein level"/>
<organism>
    <name type="scientific">Arabidopsis thaliana</name>
    <name type="common">Mouse-ear cress</name>
    <dbReference type="NCBI Taxonomy" id="3702"/>
    <lineage>
        <taxon>Eukaryota</taxon>
        <taxon>Viridiplantae</taxon>
        <taxon>Streptophyta</taxon>
        <taxon>Embryophyta</taxon>
        <taxon>Tracheophyta</taxon>
        <taxon>Spermatophyta</taxon>
        <taxon>Magnoliopsida</taxon>
        <taxon>eudicotyledons</taxon>
        <taxon>Gunneridae</taxon>
        <taxon>Pentapetalae</taxon>
        <taxon>rosids</taxon>
        <taxon>malvids</taxon>
        <taxon>Brassicales</taxon>
        <taxon>Brassicaceae</taxon>
        <taxon>Camelineae</taxon>
        <taxon>Arabidopsis</taxon>
    </lineage>
</organism>
<comment type="function">
    <text evidence="6 8 9 10">Catalyzes the synthesis of mevalonate, the specific precursor of all isoprenoid compounds present in plants.</text>
</comment>
<comment type="catalytic activity">
    <reaction evidence="3">
        <text>(R)-mevalonate + 2 NADP(+) + CoA = (3S)-3-hydroxy-3-methylglutaryl-CoA + 2 NADPH + 2 H(+)</text>
        <dbReference type="Rhea" id="RHEA:15989"/>
        <dbReference type="ChEBI" id="CHEBI:15378"/>
        <dbReference type="ChEBI" id="CHEBI:36464"/>
        <dbReference type="ChEBI" id="CHEBI:43074"/>
        <dbReference type="ChEBI" id="CHEBI:57287"/>
        <dbReference type="ChEBI" id="CHEBI:57783"/>
        <dbReference type="ChEBI" id="CHEBI:58349"/>
        <dbReference type="EC" id="1.1.1.34"/>
    </reaction>
</comment>
<comment type="activity regulation">
    <text evidence="5 9 11 12 13 15">Regulated at the post-translational level in response to alterations of sphingolipid and sterol biosynthetic pathways. Negatively regulated by a PP2A-dependent dephosphorylation occurring at a site different than Ser-577. Completely inhibited by mevinolin (IC(50) = 12.5 nM). Reversibly inactivated by phosphorylation at Ser-577 by spinach or Brassica oleracea HMGR kinases in a cell-free system (PubMed:10318703, PubMed:7588795). Down-regulated by KIN10 through its phosphorylation at Ser-577 (PubMed:28263378).</text>
</comment>
<comment type="pathway">
    <text>Metabolic intermediate biosynthesis; (R)-mevalonate biosynthesis; (R)-mevalonate from acetyl-CoA: step 3/3.</text>
</comment>
<comment type="subunit">
    <text evidence="11">Interacts (via N-terminus) with B''ALPHA and B''BETA.</text>
</comment>
<comment type="subcellular location">
    <molecule>Isoform Short</molecule>
    <subcellularLocation>
        <location evidence="7 16">Endoplasmic reticulum membrane</location>
        <topology evidence="2">Multi-pass membrane protein</topology>
    </subcellularLocation>
    <text evidence="7 16">Also observed within spherical structures located along the endoplasmic reticulum strands.</text>
</comment>
<comment type="subcellular location">
    <molecule>Isoform Long</molecule>
    <subcellularLocation>
        <location evidence="7">Endoplasmic reticulum membrane</location>
        <topology evidence="2">Multi-pass membrane protein</topology>
    </subcellularLocation>
</comment>
<comment type="alternative products">
    <event type="alternative initiation"/>
    <isoform>
        <id>P14891-1</id>
        <name>Short</name>
        <name evidence="19">HMGR1S</name>
        <sequence type="displayed"/>
    </isoform>
    <isoform>
        <id>P14891-2</id>
        <name>Long</name>
        <name evidence="19">HMGR1L</name>
        <sequence type="described" ref="VSP_041282"/>
    </isoform>
</comment>
<comment type="tissue specificity">
    <text evidence="10 14 16">Found in all tissues. Isoform Short is expressed at low levels specifically in flowers. Expressed in both the tapetum and microspores.</text>
</comment>
<comment type="induction">
    <text evidence="9 17 18">Down-regulated by light in immature leaves, but not in roots. Not regulated by myriocin, squalestatin or terbinafine.</text>
</comment>
<comment type="domain">
    <text>The N-terminal domain (1-178) of the short isoform is necessary and sufficient for directing the protein to the endoplasmic reticulum and to spherical structures.</text>
</comment>
<comment type="PTM">
    <text evidence="5 13 15">Inactivated by phosphorylation at Ser-577 by KIN10 activated form (PubMed:28263378). Probably also phosphorylated at additional sites (PubMed:10318703, PubMed:7588795).</text>
</comment>
<comment type="disruption phenotype">
    <text evidence="6 8 10">Dwarfing, early senescence, and sterility. 65% lower levels in triterpenoids content and 50% lower levels in sterol content. Hmg1 and hmg2 double mutants are lethal during male gametophyte development.</text>
</comment>
<comment type="similarity">
    <text evidence="25">Belongs to the HMG-CoA reductase family.</text>
</comment>
<feature type="chain" id="PRO_0000114433" description="3-hydroxy-3-methylglutaryl-coenzyme A reductase 1">
    <location>
        <begin position="1"/>
        <end position="592"/>
    </location>
</feature>
<feature type="transmembrane region" description="Helical" evidence="2">
    <location>
        <begin position="47"/>
        <end position="69"/>
    </location>
</feature>
<feature type="transmembrane region" description="Helical" evidence="2">
    <location>
        <begin position="97"/>
        <end position="117"/>
    </location>
</feature>
<feature type="region of interest" description="Disordered" evidence="4">
    <location>
        <begin position="1"/>
        <end position="45"/>
    </location>
</feature>
<feature type="region of interest" description="Linker" evidence="1">
    <location>
        <begin position="118"/>
        <end position="171"/>
    </location>
</feature>
<feature type="region of interest" description="Catalytic" evidence="1">
    <location>
        <begin position="172"/>
        <end position="592"/>
    </location>
</feature>
<feature type="compositionally biased region" description="Polar residues" evidence="4">
    <location>
        <begin position="12"/>
        <end position="28"/>
    </location>
</feature>
<feature type="active site" description="Charge relay system" evidence="1">
    <location>
        <position position="265"/>
    </location>
</feature>
<feature type="active site" description="Charge relay system" evidence="1">
    <location>
        <position position="397"/>
    </location>
</feature>
<feature type="active site" description="Charge relay system" evidence="1">
    <location>
        <position position="473"/>
    </location>
</feature>
<feature type="active site" description="Proton donor" evidence="3">
    <location>
        <position position="571"/>
    </location>
</feature>
<feature type="modified residue" description="Phosphoserine" evidence="5 13 15">
    <location>
        <position position="577"/>
    </location>
</feature>
<feature type="glycosylation site" description="N-linked (GlcNAc...) asparagine" evidence="2">
    <location>
        <position position="16"/>
    </location>
</feature>
<feature type="glycosylation site" description="N-linked (GlcNAc...) asparagine" evidence="2">
    <location>
        <position position="19"/>
    </location>
</feature>
<feature type="glycosylation site" description="N-linked (GlcNAc...) asparagine" evidence="2">
    <location>
        <position position="329"/>
    </location>
</feature>
<feature type="glycosylation site" description="N-linked (GlcNAc...) asparagine" evidence="2">
    <location>
        <position position="575"/>
    </location>
</feature>
<feature type="splice variant" id="VSP_041282" description="In isoform Long." evidence="22">
    <original>M</original>
    <variation>MKKKQAGPQQTCEFVSYKTLLISPSHLSRHLTTSLLSPLSPPWRDYSFPPM</variation>
    <location>
        <position position="1"/>
    </location>
</feature>
<feature type="mutagenesis site" description="Abolishes the inactivation of activity by KIN10." evidence="13">
    <original>S</original>
    <variation>A</variation>
    <location>
        <position position="577"/>
    </location>
</feature>
<feature type="helix" evidence="29">
    <location>
        <begin position="204"/>
        <end position="207"/>
    </location>
</feature>
<feature type="strand" evidence="29">
    <location>
        <begin position="244"/>
        <end position="252"/>
    </location>
</feature>
<feature type="strand" evidence="29">
    <location>
        <begin position="255"/>
        <end position="262"/>
    </location>
</feature>
<feature type="helix" evidence="29">
    <location>
        <begin position="267"/>
        <end position="280"/>
    </location>
</feature>
<feature type="turn" evidence="29">
    <location>
        <begin position="281"/>
        <end position="283"/>
    </location>
</feature>
<feature type="strand" evidence="29">
    <location>
        <begin position="285"/>
        <end position="296"/>
    </location>
</feature>
<feature type="strand" evidence="29">
    <location>
        <begin position="299"/>
        <end position="301"/>
    </location>
</feature>
<feature type="helix" evidence="29">
    <location>
        <begin position="305"/>
        <end position="315"/>
    </location>
</feature>
<feature type="helix" evidence="29">
    <location>
        <begin position="318"/>
        <end position="320"/>
    </location>
</feature>
<feature type="helix" evidence="29">
    <location>
        <begin position="321"/>
        <end position="328"/>
    </location>
</feature>
<feature type="strand" evidence="29">
    <location>
        <begin position="336"/>
        <end position="345"/>
    </location>
</feature>
<feature type="strand" evidence="29">
    <location>
        <begin position="348"/>
        <end position="356"/>
    </location>
</feature>
<feature type="helix" evidence="29">
    <location>
        <begin position="363"/>
        <end position="376"/>
    </location>
</feature>
<feature type="turn" evidence="29">
    <location>
        <begin position="377"/>
        <end position="380"/>
    </location>
</feature>
<feature type="strand" evidence="29">
    <location>
        <begin position="385"/>
        <end position="389"/>
    </location>
</feature>
<feature type="strand" evidence="29">
    <location>
        <begin position="392"/>
        <end position="394"/>
    </location>
</feature>
<feature type="helix" evidence="29">
    <location>
        <begin position="401"/>
        <end position="406"/>
    </location>
</feature>
<feature type="strand" evidence="29">
    <location>
        <begin position="409"/>
        <end position="419"/>
    </location>
</feature>
<feature type="helix" evidence="29">
    <location>
        <begin position="420"/>
        <end position="425"/>
    </location>
</feature>
<feature type="helix" evidence="29">
    <location>
        <begin position="431"/>
        <end position="440"/>
    </location>
</feature>
<feature type="turn" evidence="29">
    <location>
        <begin position="441"/>
        <end position="443"/>
    </location>
</feature>
<feature type="helix" evidence="29">
    <location>
        <begin position="444"/>
        <end position="448"/>
    </location>
</feature>
<feature type="strand" evidence="29">
    <location>
        <begin position="452"/>
        <end position="458"/>
    </location>
</feature>
<feature type="helix" evidence="29">
    <location>
        <begin position="459"/>
        <end position="469"/>
    </location>
</feature>
<feature type="turn" evidence="29">
    <location>
        <begin position="474"/>
        <end position="476"/>
    </location>
</feature>
<feature type="helix" evidence="29">
    <location>
        <begin position="477"/>
        <end position="480"/>
    </location>
</feature>
<feature type="strand" evidence="29">
    <location>
        <begin position="483"/>
        <end position="490"/>
    </location>
</feature>
<feature type="turn" evidence="29">
    <location>
        <begin position="491"/>
        <end position="494"/>
    </location>
</feature>
<feature type="strand" evidence="29">
    <location>
        <begin position="495"/>
        <end position="505"/>
    </location>
</feature>
<feature type="strand" evidence="29">
    <location>
        <begin position="509"/>
        <end position="511"/>
    </location>
</feature>
<feature type="helix" evidence="29">
    <location>
        <begin position="512"/>
        <end position="515"/>
    </location>
</feature>
<feature type="helix" evidence="29">
    <location>
        <begin position="517"/>
        <end position="525"/>
    </location>
</feature>
<feature type="strand" evidence="29">
    <location>
        <begin position="533"/>
        <end position="535"/>
    </location>
</feature>
<feature type="helix" evidence="29">
    <location>
        <begin position="538"/>
        <end position="564"/>
    </location>
</feature>
<protein>
    <recommendedName>
        <fullName evidence="23 24">3-hydroxy-3-methylglutaryl-coenzyme A reductase 1</fullName>
        <shortName evidence="23 24">AtHMGR1</shortName>
        <shortName evidence="23 24">HMG-CoA reductase 1</shortName>
        <ecNumber evidence="3">1.1.1.34</ecNumber>
    </recommendedName>
</protein>
<accession>P14891</accession>
<accession>Q6RW12</accession>
<reference key="1">
    <citation type="journal article" date="1989" name="Plant Mol. Biol.">
        <title>Isolation and structural characterization of a cDNA encoding Arabidopsis thaliana 3-hydroxy-3-methylglutaryl coenzyme A reductase.</title>
        <authorList>
            <person name="Caelles C."/>
            <person name="Ferrer A."/>
            <person name="Balcells L."/>
            <person name="Hegardt F.G."/>
            <person name="Boronat A."/>
        </authorList>
    </citation>
    <scope>NUCLEOTIDE SEQUENCE [MRNA] (ISOFORM SHORT)</scope>
    <source>
        <strain>cv. Columbia</strain>
    </source>
</reference>
<reference key="2">
    <citation type="journal article" date="1989" name="Proc. Natl. Acad. Sci. U.S.A.">
        <title>3-hydroxy-3-methylglutaryl-coenzyme A reductase from Arabidopsis thaliana is structurally distinct from the yeast and animal enzymes.</title>
        <authorList>
            <person name="Learned R.M."/>
            <person name="Fink G.R."/>
        </authorList>
    </citation>
    <scope>NUCLEOTIDE SEQUENCE [MRNA] (ISOFORM SHORT)</scope>
</reference>
<reference key="3">
    <citation type="journal article" date="1995" name="Plant J.">
        <title>The use of an alternative promoter in the Arabidopsis thaliana HMG1 gene generates an mRNA that encodes a novel 3-hydroxy-3-methylglutaryl coenzyme A reductase isoform with an extended N-terminal region.</title>
        <authorList>
            <person name="Lumbreras V."/>
            <person name="Campos N."/>
            <person name="Boronat A."/>
        </authorList>
    </citation>
    <scope>NUCLEOTIDE SEQUENCE [GENOMIC DNA / MRNA] (ISOFORM LONG)</scope>
    <scope>TISSUE SPECIFICITY</scope>
    <scope>ALTERNATIVE INITIATION</scope>
</reference>
<reference key="4">
    <citation type="journal article" date="2000" name="Nature">
        <title>Sequence and analysis of chromosome 1 of the plant Arabidopsis thaliana.</title>
        <authorList>
            <person name="Theologis A."/>
            <person name="Ecker J.R."/>
            <person name="Palm C.J."/>
            <person name="Federspiel N.A."/>
            <person name="Kaul S."/>
            <person name="White O."/>
            <person name="Alonso J."/>
            <person name="Altafi H."/>
            <person name="Araujo R."/>
            <person name="Bowman C.L."/>
            <person name="Brooks S.Y."/>
            <person name="Buehler E."/>
            <person name="Chan A."/>
            <person name="Chao Q."/>
            <person name="Chen H."/>
            <person name="Cheuk R.F."/>
            <person name="Chin C.W."/>
            <person name="Chung M.K."/>
            <person name="Conn L."/>
            <person name="Conway A.B."/>
            <person name="Conway A.R."/>
            <person name="Creasy T.H."/>
            <person name="Dewar K."/>
            <person name="Dunn P."/>
            <person name="Etgu P."/>
            <person name="Feldblyum T.V."/>
            <person name="Feng J.-D."/>
            <person name="Fong B."/>
            <person name="Fujii C.Y."/>
            <person name="Gill J.E."/>
            <person name="Goldsmith A.D."/>
            <person name="Haas B."/>
            <person name="Hansen N.F."/>
            <person name="Hughes B."/>
            <person name="Huizar L."/>
            <person name="Hunter J.L."/>
            <person name="Jenkins J."/>
            <person name="Johnson-Hopson C."/>
            <person name="Khan S."/>
            <person name="Khaykin E."/>
            <person name="Kim C.J."/>
            <person name="Koo H.L."/>
            <person name="Kremenetskaia I."/>
            <person name="Kurtz D.B."/>
            <person name="Kwan A."/>
            <person name="Lam B."/>
            <person name="Langin-Hooper S."/>
            <person name="Lee A."/>
            <person name="Lee J.M."/>
            <person name="Lenz C.A."/>
            <person name="Li J.H."/>
            <person name="Li Y.-P."/>
            <person name="Lin X."/>
            <person name="Liu S.X."/>
            <person name="Liu Z.A."/>
            <person name="Luros J.S."/>
            <person name="Maiti R."/>
            <person name="Marziali A."/>
            <person name="Militscher J."/>
            <person name="Miranda M."/>
            <person name="Nguyen M."/>
            <person name="Nierman W.C."/>
            <person name="Osborne B.I."/>
            <person name="Pai G."/>
            <person name="Peterson J."/>
            <person name="Pham P.K."/>
            <person name="Rizzo M."/>
            <person name="Rooney T."/>
            <person name="Rowley D."/>
            <person name="Sakano H."/>
            <person name="Salzberg S.L."/>
            <person name="Schwartz J.R."/>
            <person name="Shinn P."/>
            <person name="Southwick A.M."/>
            <person name="Sun H."/>
            <person name="Tallon L.J."/>
            <person name="Tambunga G."/>
            <person name="Toriumi M.J."/>
            <person name="Town C.D."/>
            <person name="Utterback T."/>
            <person name="Van Aken S."/>
            <person name="Vaysberg M."/>
            <person name="Vysotskaia V.S."/>
            <person name="Walker M."/>
            <person name="Wu D."/>
            <person name="Yu G."/>
            <person name="Fraser C.M."/>
            <person name="Venter J.C."/>
            <person name="Davis R.W."/>
        </authorList>
    </citation>
    <scope>NUCLEOTIDE SEQUENCE [LARGE SCALE GENOMIC DNA]</scope>
    <source>
        <strain>cv. Columbia</strain>
    </source>
</reference>
<reference key="5">
    <citation type="journal article" date="2017" name="Plant J.">
        <title>Araport11: a complete reannotation of the Arabidopsis thaliana reference genome.</title>
        <authorList>
            <person name="Cheng C.Y."/>
            <person name="Krishnakumar V."/>
            <person name="Chan A.P."/>
            <person name="Thibaud-Nissen F."/>
            <person name="Schobel S."/>
            <person name="Town C.D."/>
        </authorList>
    </citation>
    <scope>GENOME REANNOTATION</scope>
    <source>
        <strain>cv. Columbia</strain>
    </source>
</reference>
<reference key="6">
    <citation type="journal article" date="2003" name="Science">
        <title>Empirical analysis of transcriptional activity in the Arabidopsis genome.</title>
        <authorList>
            <person name="Yamada K."/>
            <person name="Lim J."/>
            <person name="Dale J.M."/>
            <person name="Chen H."/>
            <person name="Shinn P."/>
            <person name="Palm C.J."/>
            <person name="Southwick A.M."/>
            <person name="Wu H.C."/>
            <person name="Kim C.J."/>
            <person name="Nguyen M."/>
            <person name="Pham P.K."/>
            <person name="Cheuk R.F."/>
            <person name="Karlin-Newmann G."/>
            <person name="Liu S.X."/>
            <person name="Lam B."/>
            <person name="Sakano H."/>
            <person name="Wu T."/>
            <person name="Yu G."/>
            <person name="Miranda M."/>
            <person name="Quach H.L."/>
            <person name="Tripp M."/>
            <person name="Chang C.H."/>
            <person name="Lee J.M."/>
            <person name="Toriumi M.J."/>
            <person name="Chan M.M."/>
            <person name="Tang C.C."/>
            <person name="Onodera C.S."/>
            <person name="Deng J.M."/>
            <person name="Akiyama K."/>
            <person name="Ansari Y."/>
            <person name="Arakawa T."/>
            <person name="Banh J."/>
            <person name="Banno F."/>
            <person name="Bowser L."/>
            <person name="Brooks S.Y."/>
            <person name="Carninci P."/>
            <person name="Chao Q."/>
            <person name="Choy N."/>
            <person name="Enju A."/>
            <person name="Goldsmith A.D."/>
            <person name="Gurjal M."/>
            <person name="Hansen N.F."/>
            <person name="Hayashizaki Y."/>
            <person name="Johnson-Hopson C."/>
            <person name="Hsuan V.W."/>
            <person name="Iida K."/>
            <person name="Karnes M."/>
            <person name="Khan S."/>
            <person name="Koesema E."/>
            <person name="Ishida J."/>
            <person name="Jiang P.X."/>
            <person name="Jones T."/>
            <person name="Kawai J."/>
            <person name="Kamiya A."/>
            <person name="Meyers C."/>
            <person name="Nakajima M."/>
            <person name="Narusaka M."/>
            <person name="Seki M."/>
            <person name="Sakurai T."/>
            <person name="Satou M."/>
            <person name="Tamse R."/>
            <person name="Vaysberg M."/>
            <person name="Wallender E.K."/>
            <person name="Wong C."/>
            <person name="Yamamura Y."/>
            <person name="Yuan S."/>
            <person name="Shinozaki K."/>
            <person name="Davis R.W."/>
            <person name="Theologis A."/>
            <person name="Ecker J.R."/>
        </authorList>
    </citation>
    <scope>NUCLEOTIDE SEQUENCE [LARGE SCALE MRNA] (ISOFORM SHORT)</scope>
    <source>
        <strain>cv. Columbia</strain>
    </source>
</reference>
<reference key="7">
    <citation type="journal article" date="1994" name="Proc. Natl. Acad. Sci. U.S.A.">
        <title>Arabidopsis thaliana contains two differentially expressed 3-hydroxy-3-methylglutaryl-CoA reductase genes, which encode microsomal forms of the enzyme.</title>
        <authorList>
            <person name="Enjuto M."/>
            <person name="Balcells L."/>
            <person name="Campos N."/>
            <person name="Caelles C."/>
            <person name="Arro M."/>
            <person name="Boronat A."/>
        </authorList>
    </citation>
    <scope>SUBCELLULAR LOCATION</scope>
    <scope>TISSUE SPECIFICITY</scope>
    <source>
        <strain>cv. Columbia</strain>
    </source>
</reference>
<reference key="8">
    <citation type="journal article" date="1995" name="Eur. J. Biochem.">
        <title>Bacterial expression of the catalytic domain of 3-hydroxy-3-methylglutaryl-CoA reductase (isoform HMGR1) from Arabidopsis thaliana, and its inactivation by phosphorylation at Ser577 by Brassica oleracea 3-hydroxy-3-methylglutaryl-CoA reductase kinase.</title>
        <authorList>
            <person name="Dale S."/>
            <person name="Arro M."/>
            <person name="Becerra B."/>
            <person name="Morrice N.G."/>
            <person name="Boronat A."/>
            <person name="Hardie D.G."/>
            <person name="Ferrer A."/>
        </authorList>
    </citation>
    <scope>PROTEIN SEQUENCE OF 573-586</scope>
    <scope>ACTIVITY REGULATION</scope>
    <scope>PHOSPHORYLATION AT SER-577</scope>
</reference>
<reference key="9">
    <citation type="journal article" date="1999" name="Plant Physiol.">
        <title>Two SNF1-related protein kinases from spinach leaf phosphorylate and inactivate 3-hydroxy-3-methylglutaryl-coenzyme A reductase, nitrate reductase, and sucrose phosphate synthase in vitro.</title>
        <authorList>
            <person name="Sugden C."/>
            <person name="Donaghy P.G."/>
            <person name="Halford N.G."/>
            <person name="Hardie D.G."/>
        </authorList>
    </citation>
    <scope>PROTEIN SEQUENCE OF 573-586</scope>
    <scope>ACTIVITY REGULATION</scope>
    <scope>PHOSPHORYLATION AT SER-577</scope>
</reference>
<reference key="10">
    <citation type="journal article" date="1996" name="Plant Physiol.">
        <title>Light suppresses 3-Hydroxy-3-methylglutaryl coenzyme A reductase gene expression in Arabidopsis thaliana.</title>
        <authorList>
            <person name="Learned R.M."/>
        </authorList>
    </citation>
    <scope>INDUCTION BY LIGHT</scope>
</reference>
<reference key="11">
    <citation type="journal article" date="1997" name="Plant J.">
        <title>Light modulates the spatial patterns of 3-hydroxy-3-methylglutaryl coenzyme A reductase gene expression in Arabidopsis thaliana.</title>
        <authorList>
            <person name="Learned R.M."/>
            <person name="Connolly E.L."/>
        </authorList>
    </citation>
    <scope>INDUCTION BY LIGHT</scope>
</reference>
<reference key="12">
    <citation type="journal article" date="2004" name="Plant J.">
        <title>Loss of function of 3-hydroxy-3-methylglutaryl coenzyme A reductase 1 (HMG1) in Arabidopsis leads to dwarfing, early senescence and male sterility, and reduced sterol levels.</title>
        <authorList>
            <person name="Suzuki M."/>
            <person name="Kamide Y."/>
            <person name="Nagata N."/>
            <person name="Seki H."/>
            <person name="Ohyama K."/>
            <person name="Kato H."/>
            <person name="Masuda K."/>
            <person name="Sato S."/>
            <person name="Kato T."/>
            <person name="Tabata S."/>
            <person name="Yoshida S."/>
            <person name="Muranaka T."/>
        </authorList>
    </citation>
    <scope>FUNCTION</scope>
    <scope>DISRUPTION PHENOTYPE</scope>
</reference>
<reference key="13">
    <citation type="journal article" date="2005" name="Plant Physiol.">
        <title>Subcellular localization of Arabidopsis 3-hydroxy-3-methylglutaryl-coenzyme A reductase.</title>
        <authorList>
            <person name="Leivar P."/>
            <person name="Gonzalez V.M."/>
            <person name="Castel S."/>
            <person name="Trelease R.N."/>
            <person name="Lopez-Iglesias C."/>
            <person name="Arro M."/>
            <person name="Boronat A."/>
            <person name="Campos N."/>
            <person name="Ferrer A."/>
            <person name="Fernandez-Busquets X."/>
        </authorList>
    </citation>
    <scope>SUBCELLULAR LOCATION</scope>
</reference>
<reference key="14">
    <citation type="journal article" date="2007" name="Chem. Pharm. Bull.">
        <title>Chemical phenotypes of the hmg1 and hmg2 mutants of Arabidopsis demonstrate the in-planta role of HMG-CoA reductase in triterpene biosynthesis.</title>
        <authorList>
            <person name="Ohyama K."/>
            <person name="Suzuki M."/>
            <person name="Masuda K."/>
            <person name="Yoshida S."/>
            <person name="Muranaka T."/>
        </authorList>
    </citation>
    <scope>FUNCTION</scope>
    <scope>DISRUPTION PHENOTYPE</scope>
</reference>
<reference key="15">
    <citation type="journal article" date="2009" name="J. Exp. Bot.">
        <title>Complete blockage of the mevalonate pathway results in male gametophyte lethality.</title>
        <authorList>
            <person name="Suzuki M."/>
            <person name="Nakagawa S."/>
            <person name="Kamide Y."/>
            <person name="Kobayashi K."/>
            <person name="Ohyama K."/>
            <person name="Hashinokuchi H."/>
            <person name="Kiuchi R."/>
            <person name="Saito K."/>
            <person name="Muranaka T."/>
            <person name="Nagata N."/>
        </authorList>
    </citation>
    <scope>FUNCTION</scope>
    <scope>DISRUPTION PHENOTYPE</scope>
    <scope>TISSUE SPECIFICITY</scope>
</reference>
<reference key="16">
    <citation type="journal article" date="2009" name="Phytochemistry">
        <title>Arabidopsis 3-hydroxy-3-methylglutaryl-CoA reductase is regulated at the post-translational level in response to alterations of the sphingolipid and the sterol biosynthetic pathways.</title>
        <authorList>
            <person name="Nieto B."/>
            <person name="Fores O."/>
            <person name="Arro M."/>
            <person name="Ferrer A."/>
        </authorList>
    </citation>
    <scope>FUNCTION</scope>
    <scope>ACTIVITY REGULATION</scope>
    <scope>INDUCTION</scope>
</reference>
<reference key="17">
    <citation type="journal article" date="2011" name="Plant Cell">
        <title>Multilevel control of Arabidopsis 3-hydroxy-3-methylglutaryl coenzyme A reductase by protein phosphatase 2A.</title>
        <authorList>
            <person name="Leivar P."/>
            <person name="Antolin-Llovera M."/>
            <person name="Ferrero S."/>
            <person name="Closa M."/>
            <person name="Arro M."/>
            <person name="Ferrer A."/>
            <person name="Boronat A."/>
            <person name="Campos N."/>
        </authorList>
    </citation>
    <scope>INTERACTION WITH B''ALPHA AND B''BETA</scope>
    <scope>ACTIVITY REGULATION</scope>
</reference>
<reference key="18">
    <citation type="journal article" date="2013" name="Plant Cell">
        <title>The SUD1 gene encodes a putative E3 ubiquitin ligase and is a positive regulator of 3-hydroxy-3-methylglutaryl coenzyme a reductase activity in Arabidopsis.</title>
        <authorList>
            <person name="Doblas V.G."/>
            <person name="Amorim-Silva V."/>
            <person name="Pose D."/>
            <person name="Rosado A."/>
            <person name="Esteban A."/>
            <person name="Arro M."/>
            <person name="Azevedo H."/>
            <person name="Bombarely A."/>
            <person name="Borsani O."/>
            <person name="Valpuesta V."/>
            <person name="Ferrer A."/>
            <person name="Tavares R.M."/>
            <person name="Botella M.A."/>
        </authorList>
    </citation>
    <scope>ACTIVITY REGULATION</scope>
</reference>
<reference key="19">
    <citation type="journal article" date="2017" name="FEBS Lett.">
        <title>AKIN10, a representative Arabidopsis SNF1-related protein kinase 1 (SnRK1), phosphorylates and downregulates plant HMG-CoA reductase.</title>
        <authorList>
            <person name="Robertlee J."/>
            <person name="Kobayashi K."/>
            <person name="Suzuki M."/>
            <person name="Muranaka T."/>
        </authorList>
    </citation>
    <scope>ACTIVITY REGULATION</scope>
    <scope>PHOSPHORYLATION AT SER-577</scope>
    <scope>MUTAGENESIS OF SER-577</scope>
</reference>
<gene>
    <name evidence="20 21 22" type="primary">HMG1</name>
    <name evidence="23 24" type="synonym">HMGR1</name>
    <name evidence="26" type="ordered locus">At1g76490</name>
    <name evidence="28" type="ORF">F14G6.9</name>
    <name evidence="27" type="ORF">F15M4.1</name>
</gene>
<evidence type="ECO:0000250" key="1"/>
<evidence type="ECO:0000255" key="2"/>
<evidence type="ECO:0000255" key="3">
    <source>
        <dbReference type="PROSITE-ProRule" id="PRU10003"/>
    </source>
</evidence>
<evidence type="ECO:0000256" key="4">
    <source>
        <dbReference type="SAM" id="MobiDB-lite"/>
    </source>
</evidence>
<evidence type="ECO:0000269" key="5">
    <source>
    </source>
</evidence>
<evidence type="ECO:0000269" key="6">
    <source>
    </source>
</evidence>
<evidence type="ECO:0000269" key="7">
    <source>
    </source>
</evidence>
<evidence type="ECO:0000269" key="8">
    <source>
    </source>
</evidence>
<evidence type="ECO:0000269" key="9">
    <source>
    </source>
</evidence>
<evidence type="ECO:0000269" key="10">
    <source>
    </source>
</evidence>
<evidence type="ECO:0000269" key="11">
    <source>
    </source>
</evidence>
<evidence type="ECO:0000269" key="12">
    <source>
    </source>
</evidence>
<evidence type="ECO:0000269" key="13">
    <source>
    </source>
</evidence>
<evidence type="ECO:0000269" key="14">
    <source>
    </source>
</evidence>
<evidence type="ECO:0000269" key="15">
    <source>
    </source>
</evidence>
<evidence type="ECO:0000269" key="16">
    <source>
    </source>
</evidence>
<evidence type="ECO:0000269" key="17">
    <source>
    </source>
</evidence>
<evidence type="ECO:0000269" key="18">
    <source>
    </source>
</evidence>
<evidence type="ECO:0000303" key="19">
    <source>
    </source>
</evidence>
<evidence type="ECO:0000303" key="20">
    <source>
    </source>
</evidence>
<evidence type="ECO:0000303" key="21">
    <source>
    </source>
</evidence>
<evidence type="ECO:0000303" key="22">
    <source>
    </source>
</evidence>
<evidence type="ECO:0000303" key="23">
    <source>
    </source>
</evidence>
<evidence type="ECO:0000303" key="24">
    <source>
    </source>
</evidence>
<evidence type="ECO:0000305" key="25"/>
<evidence type="ECO:0000312" key="26">
    <source>
        <dbReference type="Araport" id="AT1G76490"/>
    </source>
</evidence>
<evidence type="ECO:0000312" key="27">
    <source>
        <dbReference type="EMBL" id="AAF16652.1"/>
    </source>
</evidence>
<evidence type="ECO:0000312" key="28">
    <source>
        <dbReference type="EMBL" id="AAG51957.1"/>
    </source>
</evidence>
<evidence type="ECO:0007829" key="29">
    <source>
        <dbReference type="PDB" id="8ECG"/>
    </source>
</evidence>
<dbReference type="EC" id="1.1.1.34" evidence="3"/>
<dbReference type="EMBL" id="X15032">
    <property type="protein sequence ID" value="CAA33139.1"/>
    <property type="molecule type" value="mRNA"/>
</dbReference>
<dbReference type="EMBL" id="J04537">
    <property type="protein sequence ID" value="AAA76821.1"/>
    <property type="molecule type" value="mRNA"/>
</dbReference>
<dbReference type="EMBL" id="L19261">
    <property type="protein sequence ID" value="AAA32814.1"/>
    <property type="molecule type" value="Genomic_DNA"/>
</dbReference>
<dbReference type="EMBL" id="AY488113">
    <property type="protein sequence ID" value="AAR83122.1"/>
    <property type="molecule type" value="mRNA"/>
</dbReference>
<dbReference type="EMBL" id="AC012394">
    <property type="protein sequence ID" value="AAF16652.1"/>
    <property type="molecule type" value="Genomic_DNA"/>
</dbReference>
<dbReference type="EMBL" id="AC015450">
    <property type="protein sequence ID" value="AAG51957.1"/>
    <property type="molecule type" value="Genomic_DNA"/>
</dbReference>
<dbReference type="EMBL" id="CP002684">
    <property type="protein sequence ID" value="AEE35849.1"/>
    <property type="molecule type" value="Genomic_DNA"/>
</dbReference>
<dbReference type="EMBL" id="AF385690">
    <property type="protein sequence ID" value="AAK60283.1"/>
    <property type="molecule type" value="mRNA"/>
</dbReference>
<dbReference type="EMBL" id="BT000703">
    <property type="protein sequence ID" value="AAN31847.1"/>
    <property type="molecule type" value="mRNA"/>
</dbReference>
<dbReference type="EMBL" id="BT010468">
    <property type="protein sequence ID" value="AAQ65091.1"/>
    <property type="molecule type" value="mRNA"/>
</dbReference>
<dbReference type="PIR" id="A32107">
    <property type="entry name" value="A32107"/>
</dbReference>
<dbReference type="RefSeq" id="NP_177775.2">
    <molecule id="P14891-2"/>
    <property type="nucleotide sequence ID" value="NM_106299.4"/>
</dbReference>
<dbReference type="PDB" id="7ULI">
    <property type="method" value="X-ray"/>
    <property type="resolution" value="1.90 A"/>
    <property type="chains" value="AAA=1-592"/>
</dbReference>
<dbReference type="PDB" id="8ECG">
    <property type="method" value="X-ray"/>
    <property type="resolution" value="2.13 A"/>
    <property type="chains" value="A=121-592"/>
</dbReference>
<dbReference type="PDBsum" id="7ULI"/>
<dbReference type="PDBsum" id="8ECG"/>
<dbReference type="SMR" id="P14891"/>
<dbReference type="FunCoup" id="P14891">
    <property type="interactions" value="839"/>
</dbReference>
<dbReference type="STRING" id="3702.P14891"/>
<dbReference type="GlyCosmos" id="P14891">
    <property type="glycosylation" value="4 sites, No reported glycans"/>
</dbReference>
<dbReference type="GlyGen" id="P14891">
    <property type="glycosylation" value="4 sites"/>
</dbReference>
<dbReference type="iPTMnet" id="P14891"/>
<dbReference type="PaxDb" id="3702-AT1G76490.1"/>
<dbReference type="ProteomicsDB" id="232099">
    <molecule id="P14891-1"/>
</dbReference>
<dbReference type="EnsemblPlants" id="AT1G76490.1">
    <molecule id="P14891-2"/>
    <property type="protein sequence ID" value="AT1G76490.1"/>
    <property type="gene ID" value="AT1G76490"/>
</dbReference>
<dbReference type="GeneID" id="843982"/>
<dbReference type="Gramene" id="AT1G76490.1">
    <molecule id="P14891-2"/>
    <property type="protein sequence ID" value="AT1G76490.1"/>
    <property type="gene ID" value="AT1G76490"/>
</dbReference>
<dbReference type="KEGG" id="ath:AT1G76490"/>
<dbReference type="Araport" id="AT1G76490"/>
<dbReference type="TAIR" id="AT1G76490">
    <property type="gene designation" value="HMG1"/>
</dbReference>
<dbReference type="eggNOG" id="KOG2480">
    <property type="taxonomic scope" value="Eukaryota"/>
</dbReference>
<dbReference type="HOGENOM" id="CLU_001734_2_2_1"/>
<dbReference type="InParanoid" id="P14891"/>
<dbReference type="OMA" id="NPENFDT"/>
<dbReference type="OrthoDB" id="310654at2759"/>
<dbReference type="PhylomeDB" id="P14891"/>
<dbReference type="BioCyc" id="ARA:AT1G76490-MONOMER"/>
<dbReference type="BioCyc" id="MetaCyc:AT1G76490-MONOMER"/>
<dbReference type="BRENDA" id="1.1.1.34">
    <property type="organism ID" value="399"/>
</dbReference>
<dbReference type="UniPathway" id="UPA00058">
    <property type="reaction ID" value="UER00103"/>
</dbReference>
<dbReference type="PRO" id="PR:P14891"/>
<dbReference type="Proteomes" id="UP000006548">
    <property type="component" value="Chromosome 1"/>
</dbReference>
<dbReference type="ExpressionAtlas" id="P14891">
    <property type="expression patterns" value="baseline and differential"/>
</dbReference>
<dbReference type="GO" id="GO:0005783">
    <property type="term" value="C:endoplasmic reticulum"/>
    <property type="evidence" value="ECO:0000314"/>
    <property type="project" value="TAIR"/>
</dbReference>
<dbReference type="GO" id="GO:0005789">
    <property type="term" value="C:endoplasmic reticulum membrane"/>
    <property type="evidence" value="ECO:0000314"/>
    <property type="project" value="TAIR"/>
</dbReference>
<dbReference type="GO" id="GO:0004420">
    <property type="term" value="F:hydroxymethylglutaryl-CoA reductase (NADPH) activity"/>
    <property type="evidence" value="ECO:0007669"/>
    <property type="project" value="UniProtKB-EC"/>
</dbReference>
<dbReference type="GO" id="GO:0015936">
    <property type="term" value="P:coenzyme A metabolic process"/>
    <property type="evidence" value="ECO:0007669"/>
    <property type="project" value="InterPro"/>
</dbReference>
<dbReference type="GO" id="GO:0019287">
    <property type="term" value="P:isopentenyl diphosphate biosynthetic process, mevalonate pathway"/>
    <property type="evidence" value="ECO:0000314"/>
    <property type="project" value="TAIR"/>
</dbReference>
<dbReference type="GO" id="GO:0008299">
    <property type="term" value="P:isoprenoid biosynthetic process"/>
    <property type="evidence" value="ECO:0000250"/>
    <property type="project" value="TAIR"/>
</dbReference>
<dbReference type="GO" id="GO:0016126">
    <property type="term" value="P:sterol biosynthetic process"/>
    <property type="evidence" value="ECO:0000315"/>
    <property type="project" value="TAIR"/>
</dbReference>
<dbReference type="CDD" id="cd00643">
    <property type="entry name" value="HMG-CoA_reductase_classI"/>
    <property type="match status" value="1"/>
</dbReference>
<dbReference type="FunFam" id="1.10.3270.10:FF:000002">
    <property type="entry name" value="3-hydroxy-3-methylglutaryl coenzyme A reductase"/>
    <property type="match status" value="1"/>
</dbReference>
<dbReference type="FunFam" id="3.30.70.420:FF:000001">
    <property type="entry name" value="3-hydroxy-3-methylglutaryl coenzyme A reductase"/>
    <property type="match status" value="1"/>
</dbReference>
<dbReference type="FunFam" id="3.90.770.10:FF:000001">
    <property type="entry name" value="3-hydroxy-3-methylglutaryl coenzyme A reductase"/>
    <property type="match status" value="1"/>
</dbReference>
<dbReference type="Gene3D" id="3.90.770.10">
    <property type="entry name" value="3-hydroxy-3-methylglutaryl-coenzyme A Reductase, Chain A, domain 2"/>
    <property type="match status" value="1"/>
</dbReference>
<dbReference type="Gene3D" id="1.10.3270.10">
    <property type="entry name" value="HMGR, N-terminal domain"/>
    <property type="match status" value="1"/>
</dbReference>
<dbReference type="Gene3D" id="3.30.70.420">
    <property type="entry name" value="Hydroxymethylglutaryl-CoA reductase, class I/II, NAD/NADP-binding domain"/>
    <property type="match status" value="1"/>
</dbReference>
<dbReference type="InterPro" id="IPR002202">
    <property type="entry name" value="HMG_CoA_Rdtase"/>
</dbReference>
<dbReference type="InterPro" id="IPR023074">
    <property type="entry name" value="HMG_CoA_Rdtase_cat_sf"/>
</dbReference>
<dbReference type="InterPro" id="IPR023076">
    <property type="entry name" value="HMG_CoA_Rdtase_CS"/>
</dbReference>
<dbReference type="InterPro" id="IPR004554">
    <property type="entry name" value="HMG_CoA_Rdtase_eu_arc"/>
</dbReference>
<dbReference type="InterPro" id="IPR023282">
    <property type="entry name" value="HMG_CoA_Rdtase_N"/>
</dbReference>
<dbReference type="InterPro" id="IPR009023">
    <property type="entry name" value="HMG_CoA_Rdtase_NAD(P)-bd_sf"/>
</dbReference>
<dbReference type="InterPro" id="IPR009029">
    <property type="entry name" value="HMG_CoA_Rdtase_sub-bd_dom_sf"/>
</dbReference>
<dbReference type="NCBIfam" id="TIGR00533">
    <property type="entry name" value="HMG_CoA_R_NADP"/>
    <property type="match status" value="1"/>
</dbReference>
<dbReference type="PANTHER" id="PTHR10572">
    <property type="entry name" value="3-HYDROXY-3-METHYLGLUTARYL-COENZYME A REDUCTASE"/>
    <property type="match status" value="1"/>
</dbReference>
<dbReference type="PANTHER" id="PTHR10572:SF24">
    <property type="entry name" value="3-HYDROXY-3-METHYLGLUTARYL-COENZYME A REDUCTASE"/>
    <property type="match status" value="1"/>
</dbReference>
<dbReference type="Pfam" id="PF00368">
    <property type="entry name" value="HMG-CoA_red"/>
    <property type="match status" value="1"/>
</dbReference>
<dbReference type="PRINTS" id="PR00071">
    <property type="entry name" value="HMGCOARDTASE"/>
</dbReference>
<dbReference type="SUPFAM" id="SSF55035">
    <property type="entry name" value="NAD-binding domain of HMG-CoA reductase"/>
    <property type="match status" value="1"/>
</dbReference>
<dbReference type="SUPFAM" id="SSF56542">
    <property type="entry name" value="Substrate-binding domain of HMG-CoA reductase"/>
    <property type="match status" value="1"/>
</dbReference>
<dbReference type="PROSITE" id="PS00066">
    <property type="entry name" value="HMG_COA_REDUCTASE_1"/>
    <property type="match status" value="1"/>
</dbReference>
<dbReference type="PROSITE" id="PS00318">
    <property type="entry name" value="HMG_COA_REDUCTASE_2"/>
    <property type="match status" value="1"/>
</dbReference>
<dbReference type="PROSITE" id="PS01192">
    <property type="entry name" value="HMG_COA_REDUCTASE_3"/>
    <property type="match status" value="1"/>
</dbReference>
<dbReference type="PROSITE" id="PS50065">
    <property type="entry name" value="HMG_COA_REDUCTASE_4"/>
    <property type="match status" value="1"/>
</dbReference>